<feature type="signal peptide" evidence="2">
    <location>
        <begin position="1"/>
        <end position="40"/>
    </location>
</feature>
<feature type="chain" id="PRO_0000023475" description="Pectinesterase 2">
    <location>
        <begin position="41"/>
        <end position="587"/>
    </location>
</feature>
<feature type="active site" description="Proton donor" evidence="3">
    <location>
        <position position="404"/>
    </location>
</feature>
<feature type="active site" description="Nucleophile" evidence="3">
    <location>
        <position position="425"/>
    </location>
</feature>
<feature type="binding site" evidence="1">
    <location>
        <position position="351"/>
    </location>
    <ligand>
        <name>substrate</name>
    </ligand>
</feature>
<feature type="binding site" evidence="1">
    <location>
        <position position="381"/>
    </location>
    <ligand>
        <name>substrate</name>
    </ligand>
</feature>
<feature type="binding site" evidence="1">
    <location>
        <position position="493"/>
    </location>
    <ligand>
        <name>substrate</name>
    </ligand>
</feature>
<feature type="binding site" evidence="1">
    <location>
        <position position="495"/>
    </location>
    <ligand>
        <name>substrate</name>
    </ligand>
</feature>
<feature type="site" description="Transition state stabilizer" evidence="1">
    <location>
        <position position="403"/>
    </location>
</feature>
<feature type="glycosylation site" description="N-linked (GlcNAc...) asparagine" evidence="2">
    <location>
        <position position="99"/>
    </location>
</feature>
<feature type="glycosylation site" description="N-linked (GlcNAc...) asparagine" evidence="2">
    <location>
        <position position="218"/>
    </location>
</feature>
<feature type="disulfide bond" evidence="1">
    <location>
        <begin position="418"/>
        <end position="438"/>
    </location>
</feature>
<feature type="sequence conflict" description="In Ref. 4; AAC50023." evidence="5" ref="4">
    <original>S</original>
    <variation>F</variation>
    <location>
        <position position="55"/>
    </location>
</feature>
<feature type="sequence conflict" description="In Ref. 4; AAC50023." evidence="5" ref="4">
    <original>SSTFTNNNN</original>
    <variation>FFNLHQQQQ</variation>
    <location>
        <begin position="233"/>
        <end position="241"/>
    </location>
</feature>
<feature type="sequence conflict" description="In Ref. 4; AAC50023." evidence="5" ref="4">
    <original>TTVA</original>
    <variation>DNGS</variation>
    <location>
        <begin position="288"/>
        <end position="291"/>
    </location>
</feature>
<comment type="function">
    <text evidence="1">Acts in the modification of cell walls via demethylesterification of cell wall pectin.</text>
</comment>
<comment type="catalytic activity">
    <reaction>
        <text>[(1-&gt;4)-alpha-D-galacturonosyl methyl ester](n) + n H2O = [(1-&gt;4)-alpha-D-galacturonosyl](n) + n methanol + n H(+)</text>
        <dbReference type="Rhea" id="RHEA:22380"/>
        <dbReference type="Rhea" id="RHEA-COMP:14570"/>
        <dbReference type="Rhea" id="RHEA-COMP:14573"/>
        <dbReference type="ChEBI" id="CHEBI:15377"/>
        <dbReference type="ChEBI" id="CHEBI:15378"/>
        <dbReference type="ChEBI" id="CHEBI:17790"/>
        <dbReference type="ChEBI" id="CHEBI:140522"/>
        <dbReference type="ChEBI" id="CHEBI:140523"/>
        <dbReference type="EC" id="3.1.1.11"/>
    </reaction>
</comment>
<comment type="pathway">
    <text>Glycan metabolism; pectin degradation; 2-dehydro-3-deoxy-D-gluconate from pectin: step 1/5.</text>
</comment>
<comment type="subcellular location">
    <subcellularLocation>
        <location evidence="5">Secreted</location>
        <location evidence="5">Cell wall</location>
    </subcellularLocation>
</comment>
<comment type="tissue specificity">
    <text evidence="4">Expressed in flower buds.</text>
</comment>
<comment type="miscellaneous">
    <text>The PMEI region may act as an autoinhibitory domain and prevent untimely PME activity during transport.</text>
</comment>
<comment type="similarity">
    <text evidence="5">In the N-terminal section; belongs to the PMEI family.</text>
</comment>
<comment type="similarity">
    <text evidence="5">In the C-terminal section; belongs to the pectinesterase family.</text>
</comment>
<protein>
    <recommendedName>
        <fullName>Pectinesterase 2</fullName>
        <shortName>PE 2</shortName>
        <ecNumber>3.1.1.11</ecNumber>
    </recommendedName>
    <alternativeName>
        <fullName>Pectin methylesterase 2</fullName>
        <shortName>AtPME2</shortName>
    </alternativeName>
</protein>
<name>PME2_ARATH</name>
<accession>Q42534</accession>
<accession>Q9SSB0</accession>
<dbReference type="EC" id="3.1.1.11"/>
<dbReference type="EMBL" id="AC009324">
    <property type="protein sequence ID" value="AAF02856.1"/>
    <property type="molecule type" value="Genomic_DNA"/>
</dbReference>
<dbReference type="EMBL" id="CP002684">
    <property type="protein sequence ID" value="AEE33007.1"/>
    <property type="molecule type" value="Genomic_DNA"/>
</dbReference>
<dbReference type="EMBL" id="AF361637">
    <property type="protein sequence ID" value="AAK32805.1"/>
    <property type="molecule type" value="mRNA"/>
</dbReference>
<dbReference type="EMBL" id="AY133609">
    <property type="protein sequence ID" value="AAM91439.1"/>
    <property type="molecule type" value="mRNA"/>
</dbReference>
<dbReference type="EMBL" id="U25649">
    <property type="protein sequence ID" value="AAC50023.1"/>
    <property type="molecule type" value="Genomic_DNA"/>
</dbReference>
<dbReference type="PIR" id="D96578">
    <property type="entry name" value="D96578"/>
</dbReference>
<dbReference type="PIR" id="PC4168">
    <property type="entry name" value="PC4168"/>
</dbReference>
<dbReference type="RefSeq" id="NP_175786.1">
    <property type="nucleotide sequence ID" value="NM_104260.5"/>
</dbReference>
<dbReference type="SMR" id="Q42534"/>
<dbReference type="BioGRID" id="27045">
    <property type="interactions" value="1"/>
</dbReference>
<dbReference type="FunCoup" id="Q42534">
    <property type="interactions" value="355"/>
</dbReference>
<dbReference type="STRING" id="3702.Q42534"/>
<dbReference type="GlyCosmos" id="Q42534">
    <property type="glycosylation" value="2 sites, No reported glycans"/>
</dbReference>
<dbReference type="GlyGen" id="Q42534">
    <property type="glycosylation" value="2 sites"/>
</dbReference>
<dbReference type="iPTMnet" id="Q42534"/>
<dbReference type="PaxDb" id="3702-AT1G53830.1"/>
<dbReference type="ProteomicsDB" id="234980"/>
<dbReference type="EnsemblPlants" id="AT1G53830.1">
    <property type="protein sequence ID" value="AT1G53830.1"/>
    <property type="gene ID" value="AT1G53830"/>
</dbReference>
<dbReference type="GeneID" id="841820"/>
<dbReference type="Gramene" id="AT1G53830.1">
    <property type="protein sequence ID" value="AT1G53830.1"/>
    <property type="gene ID" value="AT1G53830"/>
</dbReference>
<dbReference type="KEGG" id="ath:AT1G53830"/>
<dbReference type="Araport" id="AT1G53830"/>
<dbReference type="TAIR" id="AT1G53830">
    <property type="gene designation" value="PME2"/>
</dbReference>
<dbReference type="eggNOG" id="ENOG502QSQ4">
    <property type="taxonomic scope" value="Eukaryota"/>
</dbReference>
<dbReference type="HOGENOM" id="CLU_012243_9_1_1"/>
<dbReference type="InParanoid" id="Q42534"/>
<dbReference type="OMA" id="FVKCHIT"/>
<dbReference type="PhylomeDB" id="Q42534"/>
<dbReference type="BioCyc" id="ARA:AT1G53830-MONOMER"/>
<dbReference type="UniPathway" id="UPA00545">
    <property type="reaction ID" value="UER00823"/>
</dbReference>
<dbReference type="PRO" id="PR:Q42534"/>
<dbReference type="Proteomes" id="UP000006548">
    <property type="component" value="Chromosome 1"/>
</dbReference>
<dbReference type="ExpressionAtlas" id="Q42534">
    <property type="expression patterns" value="baseline and differential"/>
</dbReference>
<dbReference type="GO" id="GO:0005576">
    <property type="term" value="C:extracellular region"/>
    <property type="evidence" value="ECO:0000250"/>
    <property type="project" value="TAIR"/>
</dbReference>
<dbReference type="GO" id="GO:0009505">
    <property type="term" value="C:plant-type cell wall"/>
    <property type="evidence" value="ECO:0007005"/>
    <property type="project" value="TAIR"/>
</dbReference>
<dbReference type="GO" id="GO:0004857">
    <property type="term" value="F:enzyme inhibitor activity"/>
    <property type="evidence" value="ECO:0007669"/>
    <property type="project" value="InterPro"/>
</dbReference>
<dbReference type="GO" id="GO:0030599">
    <property type="term" value="F:pectinesterase activity"/>
    <property type="evidence" value="ECO:0000250"/>
    <property type="project" value="TAIR"/>
</dbReference>
<dbReference type="GO" id="GO:1990110">
    <property type="term" value="P:callus formation"/>
    <property type="evidence" value="ECO:0000315"/>
    <property type="project" value="TAIR"/>
</dbReference>
<dbReference type="GO" id="GO:0042545">
    <property type="term" value="P:cell wall modification"/>
    <property type="evidence" value="ECO:0007669"/>
    <property type="project" value="InterPro"/>
</dbReference>
<dbReference type="GO" id="GO:0045490">
    <property type="term" value="P:pectin catabolic process"/>
    <property type="evidence" value="ECO:0007669"/>
    <property type="project" value="UniProtKB-UniPathway"/>
</dbReference>
<dbReference type="CDD" id="cd15798">
    <property type="entry name" value="PMEI-like_3"/>
    <property type="match status" value="1"/>
</dbReference>
<dbReference type="FunFam" id="1.20.140.40:FF:000010">
    <property type="entry name" value="Pectinesterase"/>
    <property type="match status" value="1"/>
</dbReference>
<dbReference type="FunFam" id="2.160.20.10:FF:000001">
    <property type="entry name" value="Pectinesterase"/>
    <property type="match status" value="1"/>
</dbReference>
<dbReference type="Gene3D" id="1.20.140.40">
    <property type="entry name" value="Invertase/pectin methylesterase inhibitor family protein"/>
    <property type="match status" value="1"/>
</dbReference>
<dbReference type="Gene3D" id="2.160.20.10">
    <property type="entry name" value="Single-stranded right-handed beta-helix, Pectin lyase-like"/>
    <property type="match status" value="1"/>
</dbReference>
<dbReference type="InterPro" id="IPR035513">
    <property type="entry name" value="Invertase/methylesterase_inhib"/>
</dbReference>
<dbReference type="InterPro" id="IPR012334">
    <property type="entry name" value="Pectin_lyas_fold"/>
</dbReference>
<dbReference type="InterPro" id="IPR011050">
    <property type="entry name" value="Pectin_lyase_fold/virulence"/>
</dbReference>
<dbReference type="InterPro" id="IPR033131">
    <property type="entry name" value="Pectinesterase_Asp_AS"/>
</dbReference>
<dbReference type="InterPro" id="IPR000070">
    <property type="entry name" value="Pectinesterase_cat"/>
</dbReference>
<dbReference type="InterPro" id="IPR006501">
    <property type="entry name" value="Pectinesterase_inhib_dom"/>
</dbReference>
<dbReference type="InterPro" id="IPR018040">
    <property type="entry name" value="Pectinesterase_Tyr_AS"/>
</dbReference>
<dbReference type="NCBIfam" id="TIGR01614">
    <property type="entry name" value="PME_inhib"/>
    <property type="match status" value="1"/>
</dbReference>
<dbReference type="PANTHER" id="PTHR31707">
    <property type="entry name" value="PECTINESTERASE"/>
    <property type="match status" value="1"/>
</dbReference>
<dbReference type="Pfam" id="PF01095">
    <property type="entry name" value="Pectinesterase"/>
    <property type="match status" value="1"/>
</dbReference>
<dbReference type="Pfam" id="PF04043">
    <property type="entry name" value="PMEI"/>
    <property type="match status" value="1"/>
</dbReference>
<dbReference type="SMART" id="SM00856">
    <property type="entry name" value="PMEI"/>
    <property type="match status" value="1"/>
</dbReference>
<dbReference type="SUPFAM" id="SSF51126">
    <property type="entry name" value="Pectin lyase-like"/>
    <property type="match status" value="1"/>
</dbReference>
<dbReference type="SUPFAM" id="SSF101148">
    <property type="entry name" value="Plant invertase/pectin methylesterase inhibitor"/>
    <property type="match status" value="1"/>
</dbReference>
<dbReference type="PROSITE" id="PS00800">
    <property type="entry name" value="PECTINESTERASE_1"/>
    <property type="match status" value="1"/>
</dbReference>
<dbReference type="PROSITE" id="PS00503">
    <property type="entry name" value="PECTINESTERASE_2"/>
    <property type="match status" value="1"/>
</dbReference>
<reference key="1">
    <citation type="journal article" date="2000" name="Nature">
        <title>Sequence and analysis of chromosome 1 of the plant Arabidopsis thaliana.</title>
        <authorList>
            <person name="Theologis A."/>
            <person name="Ecker J.R."/>
            <person name="Palm C.J."/>
            <person name="Federspiel N.A."/>
            <person name="Kaul S."/>
            <person name="White O."/>
            <person name="Alonso J."/>
            <person name="Altafi H."/>
            <person name="Araujo R."/>
            <person name="Bowman C.L."/>
            <person name="Brooks S.Y."/>
            <person name="Buehler E."/>
            <person name="Chan A."/>
            <person name="Chao Q."/>
            <person name="Chen H."/>
            <person name="Cheuk R.F."/>
            <person name="Chin C.W."/>
            <person name="Chung M.K."/>
            <person name="Conn L."/>
            <person name="Conway A.B."/>
            <person name="Conway A.R."/>
            <person name="Creasy T.H."/>
            <person name="Dewar K."/>
            <person name="Dunn P."/>
            <person name="Etgu P."/>
            <person name="Feldblyum T.V."/>
            <person name="Feng J.-D."/>
            <person name="Fong B."/>
            <person name="Fujii C.Y."/>
            <person name="Gill J.E."/>
            <person name="Goldsmith A.D."/>
            <person name="Haas B."/>
            <person name="Hansen N.F."/>
            <person name="Hughes B."/>
            <person name="Huizar L."/>
            <person name="Hunter J.L."/>
            <person name="Jenkins J."/>
            <person name="Johnson-Hopson C."/>
            <person name="Khan S."/>
            <person name="Khaykin E."/>
            <person name="Kim C.J."/>
            <person name="Koo H.L."/>
            <person name="Kremenetskaia I."/>
            <person name="Kurtz D.B."/>
            <person name="Kwan A."/>
            <person name="Lam B."/>
            <person name="Langin-Hooper S."/>
            <person name="Lee A."/>
            <person name="Lee J.M."/>
            <person name="Lenz C.A."/>
            <person name="Li J.H."/>
            <person name="Li Y.-P."/>
            <person name="Lin X."/>
            <person name="Liu S.X."/>
            <person name="Liu Z.A."/>
            <person name="Luros J.S."/>
            <person name="Maiti R."/>
            <person name="Marziali A."/>
            <person name="Militscher J."/>
            <person name="Miranda M."/>
            <person name="Nguyen M."/>
            <person name="Nierman W.C."/>
            <person name="Osborne B.I."/>
            <person name="Pai G."/>
            <person name="Peterson J."/>
            <person name="Pham P.K."/>
            <person name="Rizzo M."/>
            <person name="Rooney T."/>
            <person name="Rowley D."/>
            <person name="Sakano H."/>
            <person name="Salzberg S.L."/>
            <person name="Schwartz J.R."/>
            <person name="Shinn P."/>
            <person name="Southwick A.M."/>
            <person name="Sun H."/>
            <person name="Tallon L.J."/>
            <person name="Tambunga G."/>
            <person name="Toriumi M.J."/>
            <person name="Town C.D."/>
            <person name="Utterback T."/>
            <person name="Van Aken S."/>
            <person name="Vaysberg M."/>
            <person name="Vysotskaia V.S."/>
            <person name="Walker M."/>
            <person name="Wu D."/>
            <person name="Yu G."/>
            <person name="Fraser C.M."/>
            <person name="Venter J.C."/>
            <person name="Davis R.W."/>
        </authorList>
    </citation>
    <scope>NUCLEOTIDE SEQUENCE [LARGE SCALE GENOMIC DNA]</scope>
    <source>
        <strain>cv. Columbia</strain>
    </source>
</reference>
<reference key="2">
    <citation type="journal article" date="2017" name="Plant J.">
        <title>Araport11: a complete reannotation of the Arabidopsis thaliana reference genome.</title>
        <authorList>
            <person name="Cheng C.Y."/>
            <person name="Krishnakumar V."/>
            <person name="Chan A.P."/>
            <person name="Thibaud-Nissen F."/>
            <person name="Schobel S."/>
            <person name="Town C.D."/>
        </authorList>
    </citation>
    <scope>GENOME REANNOTATION</scope>
    <source>
        <strain>cv. Columbia</strain>
    </source>
</reference>
<reference key="3">
    <citation type="journal article" date="2003" name="Science">
        <title>Empirical analysis of transcriptional activity in the Arabidopsis genome.</title>
        <authorList>
            <person name="Yamada K."/>
            <person name="Lim J."/>
            <person name="Dale J.M."/>
            <person name="Chen H."/>
            <person name="Shinn P."/>
            <person name="Palm C.J."/>
            <person name="Southwick A.M."/>
            <person name="Wu H.C."/>
            <person name="Kim C.J."/>
            <person name="Nguyen M."/>
            <person name="Pham P.K."/>
            <person name="Cheuk R.F."/>
            <person name="Karlin-Newmann G."/>
            <person name="Liu S.X."/>
            <person name="Lam B."/>
            <person name="Sakano H."/>
            <person name="Wu T."/>
            <person name="Yu G."/>
            <person name="Miranda M."/>
            <person name="Quach H.L."/>
            <person name="Tripp M."/>
            <person name="Chang C.H."/>
            <person name="Lee J.M."/>
            <person name="Toriumi M.J."/>
            <person name="Chan M.M."/>
            <person name="Tang C.C."/>
            <person name="Onodera C.S."/>
            <person name="Deng J.M."/>
            <person name="Akiyama K."/>
            <person name="Ansari Y."/>
            <person name="Arakawa T."/>
            <person name="Banh J."/>
            <person name="Banno F."/>
            <person name="Bowser L."/>
            <person name="Brooks S.Y."/>
            <person name="Carninci P."/>
            <person name="Chao Q."/>
            <person name="Choy N."/>
            <person name="Enju A."/>
            <person name="Goldsmith A.D."/>
            <person name="Gurjal M."/>
            <person name="Hansen N.F."/>
            <person name="Hayashizaki Y."/>
            <person name="Johnson-Hopson C."/>
            <person name="Hsuan V.W."/>
            <person name="Iida K."/>
            <person name="Karnes M."/>
            <person name="Khan S."/>
            <person name="Koesema E."/>
            <person name="Ishida J."/>
            <person name="Jiang P.X."/>
            <person name="Jones T."/>
            <person name="Kawai J."/>
            <person name="Kamiya A."/>
            <person name="Meyers C."/>
            <person name="Nakajima M."/>
            <person name="Narusaka M."/>
            <person name="Seki M."/>
            <person name="Sakurai T."/>
            <person name="Satou M."/>
            <person name="Tamse R."/>
            <person name="Vaysberg M."/>
            <person name="Wallender E.K."/>
            <person name="Wong C."/>
            <person name="Yamamura Y."/>
            <person name="Yuan S."/>
            <person name="Shinozaki K."/>
            <person name="Davis R.W."/>
            <person name="Theologis A."/>
            <person name="Ecker J.R."/>
        </authorList>
    </citation>
    <scope>NUCLEOTIDE SEQUENCE [LARGE SCALE MRNA]</scope>
    <source>
        <strain>cv. Columbia</strain>
    </source>
</reference>
<reference key="4">
    <citation type="journal article" date="1996" name="Gene">
        <title>Clustered genes within the genome of Arabidopsis thaliana encoding pectin methylesterase-like enzymes.</title>
        <authorList>
            <person name="Richard L."/>
            <person name="Qin L.X."/>
            <person name="Goldberg R."/>
        </authorList>
    </citation>
    <scope>NUCLEOTIDE SEQUENCE [GENOMIC DNA] OF 6-587</scope>
</reference>
<reference key="5">
    <citation type="journal article" date="2004" name="Carbohydr. Res.">
        <title>Pectin methylesterases: sequence-structural features and phylogenetic relationships.</title>
        <authorList>
            <person name="Markovic O."/>
            <person name="Janecek S."/>
        </authorList>
    </citation>
    <scope>GENE FAMILY</scope>
    <scope>NOMENCLATURE</scope>
</reference>
<reference key="6">
    <citation type="journal article" date="2006" name="Planta">
        <title>Comprehensive expression profiling of the pectin methylesterase gene family during silique development in Arabidopsis thaliana.</title>
        <authorList>
            <person name="Louvet R."/>
            <person name="Cavel E."/>
            <person name="Gutierrez L."/>
            <person name="Guenin S."/>
            <person name="Roger D."/>
            <person name="Gillet F."/>
            <person name="Guerineau F."/>
            <person name="Pelloux J."/>
        </authorList>
    </citation>
    <scope>TISSUE SPECIFICITY</scope>
    <scope>DEVELOPMENTAL STAGE</scope>
</reference>
<gene>
    <name type="primary">PME2</name>
    <name type="synonym">ARATH8</name>
    <name type="ordered locus">At1g53830</name>
    <name type="ORF">T18A20.6</name>
</gene>
<organism>
    <name type="scientific">Arabidopsis thaliana</name>
    <name type="common">Mouse-ear cress</name>
    <dbReference type="NCBI Taxonomy" id="3702"/>
    <lineage>
        <taxon>Eukaryota</taxon>
        <taxon>Viridiplantae</taxon>
        <taxon>Streptophyta</taxon>
        <taxon>Embryophyta</taxon>
        <taxon>Tracheophyta</taxon>
        <taxon>Spermatophyta</taxon>
        <taxon>Magnoliopsida</taxon>
        <taxon>eudicotyledons</taxon>
        <taxon>Gunneridae</taxon>
        <taxon>Pentapetalae</taxon>
        <taxon>rosids</taxon>
        <taxon>malvids</taxon>
        <taxon>Brassicales</taxon>
        <taxon>Brassicaceae</taxon>
        <taxon>Camelineae</taxon>
        <taxon>Arabidopsis</taxon>
    </lineage>
</organism>
<keyword id="KW-0063">Aspartyl esterase</keyword>
<keyword id="KW-0134">Cell wall</keyword>
<keyword id="KW-0961">Cell wall biogenesis/degradation</keyword>
<keyword id="KW-1015">Disulfide bond</keyword>
<keyword id="KW-0325">Glycoprotein</keyword>
<keyword id="KW-0378">Hydrolase</keyword>
<keyword id="KW-1185">Reference proteome</keyword>
<keyword id="KW-0964">Secreted</keyword>
<keyword id="KW-0732">Signal</keyword>
<sequence>MAPIKEFISKFSDFKNNKKLILSSAAIALLLLASIVGIAATTTNQNKNQKITTLSSTSHAILKSVCSSTLYPELCFSAVAATGGKELTSQKEVIEASLNLTTKAVKHNYFAVKKLIAKRKGLTPREVTALHDCLETIDETLDELHVAVEDLHQYPKQKSLRKHADDLKTLISSAITNQGTCLDGFSYDDADRKVRKALLKGQVHVEHMCSNALAMIKNMTETDIANFELRDKSSTFTNNNNRKLKEVTGDLDSDGWPKWLSVGDRRLLQGSTIKADATVADDGSGDFTTVAAAVAAAPEKSNKRFVIHIKAGVYRENVEVTKKKTNIMFLGDGRGKTIITGSRNVVDGSTTFHSATVAAVGERFLARDITFQNTAGPSKHQAVALRVGSDFSAFYQCDMFAYQDTLYVHSNRQFFVKCHITGTVDFIFGNAAAVLQDCDINARRPNSGQKNMVTAQGRSDPNQNTGIVIQNCRIGGTSDLLAVKGTFPTYLGRPWKEYSRTVIMQSDISDVIRPEGWHEWSGSFALDTLTYREYLNRGGGAGTANRVKWKGYKVITSDTEAQPFTAGQFIGGGGWLASTGFPFSLSL</sequence>
<proteinExistence type="evidence at transcript level"/>
<evidence type="ECO:0000250" key="1"/>
<evidence type="ECO:0000255" key="2"/>
<evidence type="ECO:0000255" key="3">
    <source>
        <dbReference type="PROSITE-ProRule" id="PRU10040"/>
    </source>
</evidence>
<evidence type="ECO:0000269" key="4">
    <source>
    </source>
</evidence>
<evidence type="ECO:0000305" key="5"/>